<name>RL17_SYNS3</name>
<comment type="subunit">
    <text evidence="1">Part of the 50S ribosomal subunit. Contacts protein L32.</text>
</comment>
<comment type="similarity">
    <text evidence="1">Belongs to the bacterial ribosomal protein bL17 family.</text>
</comment>
<evidence type="ECO:0000255" key="1">
    <source>
        <dbReference type="HAMAP-Rule" id="MF_01368"/>
    </source>
</evidence>
<evidence type="ECO:0000305" key="2"/>
<proteinExistence type="inferred from homology"/>
<dbReference type="EMBL" id="CP000435">
    <property type="protein sequence ID" value="ABI47173.1"/>
    <property type="molecule type" value="Genomic_DNA"/>
</dbReference>
<dbReference type="RefSeq" id="WP_006854805.1">
    <property type="nucleotide sequence ID" value="NC_008319.1"/>
</dbReference>
<dbReference type="SMR" id="Q0ID29"/>
<dbReference type="STRING" id="64471.sync_0413"/>
<dbReference type="KEGG" id="syg:sync_0413"/>
<dbReference type="eggNOG" id="COG0203">
    <property type="taxonomic scope" value="Bacteria"/>
</dbReference>
<dbReference type="HOGENOM" id="CLU_074407_2_2_3"/>
<dbReference type="OrthoDB" id="9809073at2"/>
<dbReference type="Proteomes" id="UP000001961">
    <property type="component" value="Chromosome"/>
</dbReference>
<dbReference type="GO" id="GO:0022625">
    <property type="term" value="C:cytosolic large ribosomal subunit"/>
    <property type="evidence" value="ECO:0007669"/>
    <property type="project" value="TreeGrafter"/>
</dbReference>
<dbReference type="GO" id="GO:0003735">
    <property type="term" value="F:structural constituent of ribosome"/>
    <property type="evidence" value="ECO:0007669"/>
    <property type="project" value="InterPro"/>
</dbReference>
<dbReference type="GO" id="GO:0006412">
    <property type="term" value="P:translation"/>
    <property type="evidence" value="ECO:0007669"/>
    <property type="project" value="UniProtKB-UniRule"/>
</dbReference>
<dbReference type="FunFam" id="3.90.1030.10:FF:000001">
    <property type="entry name" value="50S ribosomal protein L17"/>
    <property type="match status" value="1"/>
</dbReference>
<dbReference type="Gene3D" id="3.90.1030.10">
    <property type="entry name" value="Ribosomal protein L17"/>
    <property type="match status" value="1"/>
</dbReference>
<dbReference type="HAMAP" id="MF_01368">
    <property type="entry name" value="Ribosomal_bL17"/>
    <property type="match status" value="1"/>
</dbReference>
<dbReference type="InterPro" id="IPR000456">
    <property type="entry name" value="Ribosomal_bL17"/>
</dbReference>
<dbReference type="InterPro" id="IPR036373">
    <property type="entry name" value="Ribosomal_bL17_sf"/>
</dbReference>
<dbReference type="NCBIfam" id="TIGR00059">
    <property type="entry name" value="L17"/>
    <property type="match status" value="1"/>
</dbReference>
<dbReference type="PANTHER" id="PTHR14413:SF16">
    <property type="entry name" value="LARGE RIBOSOMAL SUBUNIT PROTEIN BL17M"/>
    <property type="match status" value="1"/>
</dbReference>
<dbReference type="PANTHER" id="PTHR14413">
    <property type="entry name" value="RIBOSOMAL PROTEIN L17"/>
    <property type="match status" value="1"/>
</dbReference>
<dbReference type="Pfam" id="PF01196">
    <property type="entry name" value="Ribosomal_L17"/>
    <property type="match status" value="1"/>
</dbReference>
<dbReference type="SUPFAM" id="SSF64263">
    <property type="entry name" value="Prokaryotic ribosomal protein L17"/>
    <property type="match status" value="1"/>
</dbReference>
<feature type="chain" id="PRO_1000055978" description="Large ribosomal subunit protein bL17">
    <location>
        <begin position="1"/>
        <end position="116"/>
    </location>
</feature>
<gene>
    <name evidence="1" type="primary">rplQ</name>
    <name evidence="1" type="synonym">rpl17</name>
    <name type="ordered locus">sync_0413</name>
</gene>
<sequence length="116" mass="13187">MRHQCRVPLLGRPADQRKALLRGLTTQLIREGRVTTTKARAKALRDEAERMITLAKNGSLASRRRVLGYVYDKQLVHALFDKAPTRYGDRNGGYTRITRTVPRRGDNAEMAIIELV</sequence>
<organism>
    <name type="scientific">Synechococcus sp. (strain CC9311)</name>
    <dbReference type="NCBI Taxonomy" id="64471"/>
    <lineage>
        <taxon>Bacteria</taxon>
        <taxon>Bacillati</taxon>
        <taxon>Cyanobacteriota</taxon>
        <taxon>Cyanophyceae</taxon>
        <taxon>Synechococcales</taxon>
        <taxon>Synechococcaceae</taxon>
        <taxon>Synechococcus</taxon>
    </lineage>
</organism>
<reference key="1">
    <citation type="journal article" date="2006" name="Proc. Natl. Acad. Sci. U.S.A.">
        <title>Genome sequence of Synechococcus CC9311: insights into adaptation to a coastal environment.</title>
        <authorList>
            <person name="Palenik B."/>
            <person name="Ren Q."/>
            <person name="Dupont C.L."/>
            <person name="Myers G.S."/>
            <person name="Heidelberg J.F."/>
            <person name="Badger J.H."/>
            <person name="Madupu R."/>
            <person name="Nelson W.C."/>
            <person name="Brinkac L.M."/>
            <person name="Dodson R.J."/>
            <person name="Durkin A.S."/>
            <person name="Daugherty S.C."/>
            <person name="Sullivan S.A."/>
            <person name="Khouri H."/>
            <person name="Mohamoud Y."/>
            <person name="Halpin R."/>
            <person name="Paulsen I.T."/>
        </authorList>
    </citation>
    <scope>NUCLEOTIDE SEQUENCE [LARGE SCALE GENOMIC DNA]</scope>
    <source>
        <strain>CC9311</strain>
    </source>
</reference>
<accession>Q0ID29</accession>
<protein>
    <recommendedName>
        <fullName evidence="1">Large ribosomal subunit protein bL17</fullName>
    </recommendedName>
    <alternativeName>
        <fullName evidence="2">50S ribosomal protein L17</fullName>
    </alternativeName>
</protein>
<keyword id="KW-1185">Reference proteome</keyword>
<keyword id="KW-0687">Ribonucleoprotein</keyword>
<keyword id="KW-0689">Ribosomal protein</keyword>